<sequence length="1239" mass="136033">MDPFTQHMLEKAEQRSRALGISNASKFPLVECSVPSSSATSASGGDAGVLAPRSRSPGGQSAASGGGKVVTLGKATLEASPAKPLRHYTAVNKENLDMGIEINITTDKPIGVQVEIQEQEVTDDEEQAEGGALNPLLEAEPVNQPLARLRDTSRSRLQRMGALYSNTDDLSSPIHRTEGQFHVTTGEEEDCGNRSSRQPKQRLGKLAALADTINQWEDDTSHHEVHRLLEAPPPKPHLSSRRAEKGPAPLPPKKDEVDEASRTKQLKWDPKVLSSLEAQGFQRRESSTIKHTYDYAKQEEAAPASKVEDAVLTAKPPVPQKSTTVSQVAKNFASSAPAPKPAPAPAVSVKSGLVSGRAALFENKGTGGQSQGLRNQKDPCELSLKERMKLFETGNNKAMLPMAPIGSAPSITQIRAEEVKQHLAAMHPVTAAAATTVVAATKPKQENKLRDKVAALVANAQSSAETRIKDIDRQRQEDMQIISNRFNKQKELFDNQPSDSSVAAQARPPAPAPSRVVRPMPPPPPPPIAALSPGLASSKRRSPGDAPTTDEDSKRARKSHSDRLYPALSDLDSSGDNCCAAETASATDDSHQQDEEETESCMDESDDQSQTEDSSAGMCNGSLGREIMSAVQRNEVEMQQQQTGKKTVRYADQDMYYDDSSLNSSQVSAGIDDYLDEALVEDYGSTQDDQSDSGDEQNASRLSLGSKGTTASNSFSFRKNPASICTPIEEHHEMEMDLQTPLLSGAQPVKSELSVNQDNDNLVTLVHTVSFYRRQQSANSSNSTPVRKICREQQVMRSALAGDCHAKHRLEYDSPQQSDYVAAATDIADQTDEDDEEMQNAREVNDASQAQDKIKKLLSEVCKQQQVIGQASQALNLCAATVEFSGSTESVEGERYLLLATHRRQACLDEVQRLRVENSIRPVGAPKEKGLLTVKDITIPLRQEYVRKMASNNINGHHLVCLLKYNEHVLATKTVPTMPGLLSVKFPDVLQLNNVYADFRITLEIYGMLAQRDQLPHELKYHINLNKKGGIKTPKKKGGENRLVMPPVQSPAGPHVVRTPQLVQYGFAIFSLREIQRTTWTLTQVLGVSPLEGVVHMKVNCELSVSVEYKGFLTMFEDISGFGAWHRRWCYLNGSVINYWKYPDDEKRKTPMGSIDLNSCTSQKVTTAPRDICARLNTMLLECERPALETDQESLIIVPNGRTTTVRHLLSADTKEEREEWCAYLNKALTLLRAWGTTH</sequence>
<organism>
    <name type="scientific">Drosophila melanogaster</name>
    <name type="common">Fruit fly</name>
    <dbReference type="NCBI Taxonomy" id="7227"/>
    <lineage>
        <taxon>Eukaryota</taxon>
        <taxon>Metazoa</taxon>
        <taxon>Ecdysozoa</taxon>
        <taxon>Arthropoda</taxon>
        <taxon>Hexapoda</taxon>
        <taxon>Insecta</taxon>
        <taxon>Pterygota</taxon>
        <taxon>Neoptera</taxon>
        <taxon>Endopterygota</taxon>
        <taxon>Diptera</taxon>
        <taxon>Brachycera</taxon>
        <taxon>Muscomorpha</taxon>
        <taxon>Ephydroidea</taxon>
        <taxon>Drosophilidae</taxon>
        <taxon>Drosophila</taxon>
        <taxon>Sophophora</taxon>
    </lineage>
</organism>
<comment type="function">
    <text evidence="6 8 9 10 11">Required for cytokinesis. Essential for the structural integrity of the cleavage furrow and for completion of cleavage furrow ingression and proper formation of the midbody. Required during cellularization of syncytial embryos for the proper formation and function of the furrow canals, the stable inward folds of the plasma membrane which separate the peripheral nuclei. Also required for the formation of the pole cells, the progenitors of the adult germline which are formed by cytokinesis of the cytoplasmic buds at the posterior pole of the syncytial embryo. Essential for embryonic viability.</text>
</comment>
<comment type="subunit">
    <text evidence="14">Interacts with and bundles F-actin.</text>
</comment>
<comment type="subcellular location">
    <subcellularLocation>
        <location>Nucleus</location>
    </subcellularLocation>
    <subcellularLocation>
        <location>Cytoplasm</location>
        <location>Cytoskeleton</location>
    </subcellularLocation>
    <subcellularLocation>
        <location>Cytoplasm</location>
        <location>Cell cortex</location>
    </subcellularLocation>
    <subcellularLocation>
        <location evidence="13">Cell projection</location>
        <location evidence="13">Cilium</location>
        <location evidence="13">Flagellum</location>
    </subcellularLocation>
    <text evidence="13">Mainly found in the nucleus during interphase. Colocalizes with cortical F-actin upon nuclear envelope breakdown in mitosis and subsequently concentrates in the area of the prospective contractile ring in anaphase. This pattern persists until telophase, when the protein becomes concentrated in the midbody. Accumulates in the nucleus of newly divided cells in a diffuse staining pattern, thereby restarting the cycle. Localizes to ring canal structures at the growing end of elongating spermatid cysts (PubMed:20237161).</text>
</comment>
<comment type="alternative products">
    <event type="alternative splicing"/>
    <isoform>
        <id>Q9V4P1-1</id>
        <name>B</name>
        <sequence type="displayed"/>
    </isoform>
    <isoform>
        <id>Q9V4P1-2</id>
        <name>A</name>
        <sequence type="described" ref="VSP_017618"/>
    </isoform>
</comment>
<comment type="tissue specificity">
    <text evidence="4 7 15 16">Accumulates in the ring canals that interconnect cells of the germline cysts in males and the ovarian follicles in females. These structures develop from arrested contractile rings after a specialized cytokinesis in which the closing of the invaginating plasma membrane is incomplete. Also concentrates in the arrested cleavage furrows that initially link the oocyte to its 15 nurse cells in the early egg chamber and is subsequently lost from these furrows as germline cell division is completed.</text>
</comment>
<comment type="developmental stage">
    <text evidence="5 8 13 14">Expressed in elongating spermatid cysts during spermatogenesis (at protein level) (PubMed:20237161). Expressed throughout development and at reduced levels late in embryogenesis. Localizes to the embryonic cortex and to the metaphase furrows which separate mitotic nuclei in the syncytial embryo prior to cellularization. Concentrates in the leading edges of the furrow canals at the onset of cellularization.</text>
</comment>
<protein>
    <recommendedName>
        <fullName>Anillin</fullName>
    </recommendedName>
    <alternativeName>
        <fullName>Actin-binding protein 8</fullName>
        <shortName>ABP8</shortName>
    </alternativeName>
    <alternativeName>
        <fullName>Protein scraps</fullName>
    </alternativeName>
</protein>
<gene>
    <name type="primary">scra</name>
    <name type="synonym">ani</name>
    <name type="ORF">CG2092</name>
</gene>
<feature type="chain" id="PRO_0000227968" description="Anillin">
    <location>
        <begin position="1"/>
        <end position="1239"/>
    </location>
</feature>
<feature type="domain" description="PH" evidence="2">
    <location>
        <begin position="1106"/>
        <end position="1230"/>
    </location>
</feature>
<feature type="region of interest" description="Disordered" evidence="3">
    <location>
        <begin position="32"/>
        <end position="67"/>
    </location>
</feature>
<feature type="region of interest" description="Interaction with and bundling of F-actin">
    <location>
        <begin position="126"/>
        <end position="371"/>
    </location>
</feature>
<feature type="region of interest" description="Disordered" evidence="3">
    <location>
        <begin position="230"/>
        <end position="265"/>
    </location>
</feature>
<feature type="region of interest" description="Disordered" evidence="3">
    <location>
        <begin position="493"/>
        <end position="621"/>
    </location>
</feature>
<feature type="region of interest" description="Disordered" evidence="3">
    <location>
        <begin position="684"/>
        <end position="716"/>
    </location>
</feature>
<feature type="coiled-coil region" evidence="1">
    <location>
        <begin position="834"/>
        <end position="861"/>
    </location>
</feature>
<feature type="compositionally biased region" description="Low complexity" evidence="3">
    <location>
        <begin position="53"/>
        <end position="63"/>
    </location>
</feature>
<feature type="compositionally biased region" description="Basic and acidic residues" evidence="3">
    <location>
        <begin position="252"/>
        <end position="265"/>
    </location>
</feature>
<feature type="compositionally biased region" description="Low complexity" evidence="3">
    <location>
        <begin position="500"/>
        <end position="518"/>
    </location>
</feature>
<feature type="compositionally biased region" description="Pro residues" evidence="3">
    <location>
        <begin position="519"/>
        <end position="528"/>
    </location>
</feature>
<feature type="compositionally biased region" description="Basic and acidic residues" evidence="3">
    <location>
        <begin position="551"/>
        <end position="563"/>
    </location>
</feature>
<feature type="compositionally biased region" description="Acidic residues" evidence="3">
    <location>
        <begin position="594"/>
        <end position="610"/>
    </location>
</feature>
<feature type="compositionally biased region" description="Polar residues" evidence="3">
    <location>
        <begin position="699"/>
        <end position="716"/>
    </location>
</feature>
<feature type="modified residue" description="Phosphoserine" evidence="12">
    <location>
        <position position="712"/>
    </location>
</feature>
<feature type="modified residue" description="Phosphothreonine" evidence="12">
    <location>
        <position position="740"/>
    </location>
</feature>
<feature type="modified residue" description="Phosphoserine" evidence="12">
    <location>
        <position position="744"/>
    </location>
</feature>
<feature type="modified residue" description="Phosphoserine" evidence="12">
    <location>
        <position position="754"/>
    </location>
</feature>
<feature type="modified residue" description="Phosphothreonine" evidence="12">
    <location>
        <position position="831"/>
    </location>
</feature>
<feature type="splice variant" id="VSP_017618" description="In isoform A." evidence="17">
    <location>
        <begin position="272"/>
        <end position="298"/>
    </location>
</feature>
<feature type="mutagenesis site" description="In allele scra3. Weak maternal effect allele; abrogates separation of pole cells.">
    <original>T</original>
    <variation>I</variation>
    <location>
        <position position="549"/>
    </location>
</feature>
<feature type="mutagenesis site" description="In alleles scra1; scra3; scra4; and scra5.">
    <original>V</original>
    <variation>S</variation>
    <location>
        <position position="1107"/>
    </location>
</feature>
<feature type="mutagenesis site" description="In allele scra5. Strong maternal effect allele; abrogates cellularization of syncytial embryos.">
    <original>T</original>
    <variation>I</variation>
    <location>
        <position position="1114"/>
    </location>
</feature>
<feature type="mutagenesis site" description="In allele scra1. Strong maternal effect allele; abrogates cellularization of syncytial embryos.">
    <original>G</original>
    <variation>E</variation>
    <location>
        <position position="1121"/>
    </location>
</feature>
<feature type="mutagenesis site" description="In allele scra4. Strong maternal effect allele; abrogates cellularization of syncytial embryos.">
    <original>P</original>
    <variation>S</variation>
    <location>
        <position position="1143"/>
    </location>
</feature>
<feature type="sequence conflict" description="In Ref. 1; CAA61954." evidence="18" ref="1">
    <location>
        <begin position="38"/>
        <end position="40"/>
    </location>
</feature>
<feature type="sequence conflict" description="In Ref. 1; CAA61954." evidence="18" ref="1">
    <original>LAPRSRSPGGQ</original>
    <variation>PAP</variation>
    <location>
        <begin position="50"/>
        <end position="60"/>
    </location>
</feature>
<feature type="sequence conflict" description="In Ref. 1; CAA61954." evidence="18" ref="1">
    <original>L</original>
    <variation>P</variation>
    <location>
        <position position="228"/>
    </location>
</feature>
<feature type="sequence conflict" description="In Ref. 1; CAA61954." evidence="18" ref="1">
    <original>G</original>
    <variation>A</variation>
    <location>
        <position position="394"/>
    </location>
</feature>
<feature type="sequence conflict" description="In Ref. 1; CAA61954." evidence="18" ref="1">
    <original>M</original>
    <variation>V</variation>
    <location>
        <position position="426"/>
    </location>
</feature>
<feature type="sequence conflict" description="In Ref. 1; CAA61954." evidence="18" ref="1">
    <original>D</original>
    <variation>E</variation>
    <location>
        <position position="689"/>
    </location>
</feature>
<dbReference type="EMBL" id="X89858">
    <property type="protein sequence ID" value="CAA61954.1"/>
    <property type="molecule type" value="mRNA"/>
</dbReference>
<dbReference type="EMBL" id="AE013599">
    <property type="protein sequence ID" value="AAF59225.3"/>
    <property type="molecule type" value="Genomic_DNA"/>
</dbReference>
<dbReference type="EMBL" id="AE013599">
    <property type="protein sequence ID" value="AAM71099.1"/>
    <property type="molecule type" value="Genomic_DNA"/>
</dbReference>
<dbReference type="EMBL" id="AY069520">
    <property type="protein sequence ID" value="AAL39665.1"/>
    <property type="molecule type" value="mRNA"/>
</dbReference>
<dbReference type="PIR" id="A57369">
    <property type="entry name" value="A57369"/>
</dbReference>
<dbReference type="RefSeq" id="NP_724582.1">
    <molecule id="Q9V4P1-1"/>
    <property type="nucleotide sequence ID" value="NM_165543.2"/>
</dbReference>
<dbReference type="RefSeq" id="NP_724583.1">
    <molecule id="Q9V4P1-2"/>
    <property type="nucleotide sequence ID" value="NM_165544.2"/>
</dbReference>
<dbReference type="SMR" id="Q9V4P1"/>
<dbReference type="BioGRID" id="61572">
    <property type="interactions" value="51"/>
</dbReference>
<dbReference type="FunCoup" id="Q9V4P1">
    <property type="interactions" value="48"/>
</dbReference>
<dbReference type="IntAct" id="Q9V4P1">
    <property type="interactions" value="41"/>
</dbReference>
<dbReference type="STRING" id="7227.FBpp0087986"/>
<dbReference type="iPTMnet" id="Q9V4P1"/>
<dbReference type="PaxDb" id="7227-FBpp0087986"/>
<dbReference type="DNASU" id="35696"/>
<dbReference type="EnsemblMetazoa" id="FBtr0088911">
    <molecule id="Q9V4P1-2"/>
    <property type="protein sequence ID" value="FBpp0087985"/>
    <property type="gene ID" value="FBgn0261385"/>
</dbReference>
<dbReference type="EnsemblMetazoa" id="FBtr0088912">
    <molecule id="Q9V4P1-1"/>
    <property type="protein sequence ID" value="FBpp0087986"/>
    <property type="gene ID" value="FBgn0261385"/>
</dbReference>
<dbReference type="GeneID" id="35696"/>
<dbReference type="KEGG" id="dme:Dmel_CG2092"/>
<dbReference type="AGR" id="FB:FBgn0261385"/>
<dbReference type="CTD" id="35696"/>
<dbReference type="FlyBase" id="FBgn0261385">
    <property type="gene designation" value="scra"/>
</dbReference>
<dbReference type="VEuPathDB" id="VectorBase:FBgn0261385"/>
<dbReference type="eggNOG" id="KOG3640">
    <property type="taxonomic scope" value="Eukaryota"/>
</dbReference>
<dbReference type="GeneTree" id="ENSGT00390000008749"/>
<dbReference type="HOGENOM" id="CLU_008475_0_0_1"/>
<dbReference type="InParanoid" id="Q9V4P1"/>
<dbReference type="OMA" id="TMSIPPK"/>
<dbReference type="OrthoDB" id="5915976at2759"/>
<dbReference type="PhylomeDB" id="Q9V4P1"/>
<dbReference type="Reactome" id="R-DME-8980692">
    <property type="pathway name" value="RHOA GTPase cycle"/>
</dbReference>
<dbReference type="Reactome" id="R-DME-9013026">
    <property type="pathway name" value="RHOB GTPase cycle"/>
</dbReference>
<dbReference type="SignaLink" id="Q9V4P1"/>
<dbReference type="BioGRID-ORCS" id="35696">
    <property type="hits" value="0 hits in 1 CRISPR screen"/>
</dbReference>
<dbReference type="GenomeRNAi" id="35696"/>
<dbReference type="PRO" id="PR:Q9V4P1"/>
<dbReference type="Proteomes" id="UP000000803">
    <property type="component" value="Chromosome 2R"/>
</dbReference>
<dbReference type="Bgee" id="FBgn0261385">
    <property type="expression patterns" value="Expressed in egg cell and 62 other cell types or tissues"/>
</dbReference>
<dbReference type="ExpressionAtlas" id="Q9V4P1">
    <property type="expression patterns" value="baseline and differential"/>
</dbReference>
<dbReference type="GO" id="GO:0005826">
    <property type="term" value="C:actomyosin contractile ring"/>
    <property type="evidence" value="ECO:0000314"/>
    <property type="project" value="UniProtKB"/>
</dbReference>
<dbReference type="GO" id="GO:0032154">
    <property type="term" value="C:cleavage furrow"/>
    <property type="evidence" value="ECO:0000314"/>
    <property type="project" value="FlyBase"/>
</dbReference>
<dbReference type="GO" id="GO:0070938">
    <property type="term" value="C:contractile ring"/>
    <property type="evidence" value="ECO:0000314"/>
    <property type="project" value="FlyBase"/>
</dbReference>
<dbReference type="GO" id="GO:0005737">
    <property type="term" value="C:cytoplasm"/>
    <property type="evidence" value="ECO:0000314"/>
    <property type="project" value="FlyBase"/>
</dbReference>
<dbReference type="GO" id="GO:0045172">
    <property type="term" value="C:germline ring canal"/>
    <property type="evidence" value="ECO:0000314"/>
    <property type="project" value="UniProtKB"/>
</dbReference>
<dbReference type="GO" id="GO:0035323">
    <property type="term" value="C:male germline ring canal"/>
    <property type="evidence" value="ECO:0000314"/>
    <property type="project" value="FlyBase"/>
</dbReference>
<dbReference type="GO" id="GO:0031514">
    <property type="term" value="C:motile cilium"/>
    <property type="evidence" value="ECO:0007669"/>
    <property type="project" value="UniProtKB-SubCell"/>
</dbReference>
<dbReference type="GO" id="GO:0005634">
    <property type="term" value="C:nucleus"/>
    <property type="evidence" value="ECO:0000314"/>
    <property type="project" value="UniProtKB"/>
</dbReference>
<dbReference type="GO" id="GO:0003779">
    <property type="term" value="F:actin binding"/>
    <property type="evidence" value="ECO:0000314"/>
    <property type="project" value="FlyBase"/>
</dbReference>
<dbReference type="GO" id="GO:0051015">
    <property type="term" value="F:actin filament binding"/>
    <property type="evidence" value="ECO:0000314"/>
    <property type="project" value="WormBase"/>
</dbReference>
<dbReference type="GO" id="GO:0008017">
    <property type="term" value="F:microtubule binding"/>
    <property type="evidence" value="ECO:0000314"/>
    <property type="project" value="FlyBase"/>
</dbReference>
<dbReference type="GO" id="GO:0017022">
    <property type="term" value="F:myosin binding"/>
    <property type="evidence" value="ECO:0000314"/>
    <property type="project" value="UniProtKB"/>
</dbReference>
<dbReference type="GO" id="GO:0000915">
    <property type="term" value="P:actomyosin contractile ring assembly"/>
    <property type="evidence" value="ECO:0000315"/>
    <property type="project" value="UniProtKB"/>
</dbReference>
<dbReference type="GO" id="GO:0044837">
    <property type="term" value="P:actomyosin contractile ring organization"/>
    <property type="evidence" value="ECO:0000315"/>
    <property type="project" value="FlyBase"/>
</dbReference>
<dbReference type="GO" id="GO:0008356">
    <property type="term" value="P:asymmetric cell division"/>
    <property type="evidence" value="ECO:0000315"/>
    <property type="project" value="FlyBase"/>
</dbReference>
<dbReference type="GO" id="GO:0007349">
    <property type="term" value="P:cellularization"/>
    <property type="evidence" value="ECO:0000315"/>
    <property type="project" value="FlyBase"/>
</dbReference>
<dbReference type="GO" id="GO:0007105">
    <property type="term" value="P:cytokinesis, division site positioning"/>
    <property type="evidence" value="ECO:0000315"/>
    <property type="project" value="FlyBase"/>
</dbReference>
<dbReference type="GO" id="GO:0043063">
    <property type="term" value="P:intercellular bridge organization"/>
    <property type="evidence" value="ECO:0000315"/>
    <property type="project" value="FlyBase"/>
</dbReference>
<dbReference type="GO" id="GO:0030726">
    <property type="term" value="P:male germline ring canal formation"/>
    <property type="evidence" value="ECO:0000315"/>
    <property type="project" value="UniProtKB"/>
</dbReference>
<dbReference type="GO" id="GO:0007112">
    <property type="term" value="P:male meiosis cytokinesis"/>
    <property type="evidence" value="ECO:0000315"/>
    <property type="project" value="FlyBase"/>
</dbReference>
<dbReference type="GO" id="GO:0000281">
    <property type="term" value="P:mitotic cytokinesis"/>
    <property type="evidence" value="ECO:0000315"/>
    <property type="project" value="UniProtKB"/>
</dbReference>
<dbReference type="GO" id="GO:0048477">
    <property type="term" value="P:oogenesis"/>
    <property type="evidence" value="ECO:0007669"/>
    <property type="project" value="UniProtKB-KW"/>
</dbReference>
<dbReference type="GO" id="GO:0007009">
    <property type="term" value="P:plasma membrane organization"/>
    <property type="evidence" value="ECO:0000315"/>
    <property type="project" value="UniProtKB"/>
</dbReference>
<dbReference type="GO" id="GO:0007279">
    <property type="term" value="P:pole cell formation"/>
    <property type="evidence" value="ECO:0000315"/>
    <property type="project" value="UniProtKB"/>
</dbReference>
<dbReference type="GO" id="GO:0008104">
    <property type="term" value="P:protein localization"/>
    <property type="evidence" value="ECO:0000315"/>
    <property type="project" value="UniProtKB"/>
</dbReference>
<dbReference type="GO" id="GO:0032465">
    <property type="term" value="P:regulation of cytokinesis"/>
    <property type="evidence" value="ECO:0000315"/>
    <property type="project" value="FlyBase"/>
</dbReference>
<dbReference type="GO" id="GO:0007423">
    <property type="term" value="P:sensory organ development"/>
    <property type="evidence" value="ECO:0000315"/>
    <property type="project" value="FlyBase"/>
</dbReference>
<dbReference type="GO" id="GO:0045035">
    <property type="term" value="P:sensory organ precursor cell division"/>
    <property type="evidence" value="ECO:0000315"/>
    <property type="project" value="FlyBase"/>
</dbReference>
<dbReference type="GO" id="GO:0031106">
    <property type="term" value="P:septin ring organization"/>
    <property type="evidence" value="ECO:0000315"/>
    <property type="project" value="FlyBase"/>
</dbReference>
<dbReference type="GO" id="GO:0042060">
    <property type="term" value="P:wound healing"/>
    <property type="evidence" value="ECO:0000315"/>
    <property type="project" value="FlyBase"/>
</dbReference>
<dbReference type="CDD" id="cd01263">
    <property type="entry name" value="PH_anillin"/>
    <property type="match status" value="1"/>
</dbReference>
<dbReference type="FunFam" id="2.30.29.30:FF:000111">
    <property type="entry name" value="anillin isoform X1"/>
    <property type="match status" value="1"/>
</dbReference>
<dbReference type="Gene3D" id="2.30.29.30">
    <property type="entry name" value="Pleckstrin-homology domain (PH domain)/Phosphotyrosine-binding domain (PTB)"/>
    <property type="match status" value="1"/>
</dbReference>
<dbReference type="InterPro" id="IPR012966">
    <property type="entry name" value="AHD"/>
</dbReference>
<dbReference type="InterPro" id="IPR051364">
    <property type="entry name" value="Cytokinesis/Rho-signaling"/>
</dbReference>
<dbReference type="InterPro" id="IPR011993">
    <property type="entry name" value="PH-like_dom_sf"/>
</dbReference>
<dbReference type="InterPro" id="IPR037840">
    <property type="entry name" value="PH_Anillin"/>
</dbReference>
<dbReference type="InterPro" id="IPR001849">
    <property type="entry name" value="PH_domain"/>
</dbReference>
<dbReference type="PANTHER" id="PTHR21538:SF23">
    <property type="entry name" value="ANILLIN"/>
    <property type="match status" value="1"/>
</dbReference>
<dbReference type="PANTHER" id="PTHR21538">
    <property type="entry name" value="ANILLIN/RHOTEKIN RTKN"/>
    <property type="match status" value="1"/>
</dbReference>
<dbReference type="Pfam" id="PF08174">
    <property type="entry name" value="Anillin"/>
    <property type="match status" value="1"/>
</dbReference>
<dbReference type="Pfam" id="PF00169">
    <property type="entry name" value="PH"/>
    <property type="match status" value="1"/>
</dbReference>
<dbReference type="SMART" id="SM00233">
    <property type="entry name" value="PH"/>
    <property type="match status" value="1"/>
</dbReference>
<dbReference type="SUPFAM" id="SSF50729">
    <property type="entry name" value="PH domain-like"/>
    <property type="match status" value="1"/>
</dbReference>
<dbReference type="PROSITE" id="PS50003">
    <property type="entry name" value="PH_DOMAIN"/>
    <property type="match status" value="1"/>
</dbReference>
<proteinExistence type="evidence at protein level"/>
<accession>Q9V4P1</accession>
<accession>Q24240</accession>
<accession>Q8MKN2</accession>
<accession>Q8T067</accession>
<evidence type="ECO:0000255" key="1"/>
<evidence type="ECO:0000255" key="2">
    <source>
        <dbReference type="PROSITE-ProRule" id="PRU00145"/>
    </source>
</evidence>
<evidence type="ECO:0000256" key="3">
    <source>
        <dbReference type="SAM" id="MobiDB-lite"/>
    </source>
</evidence>
<evidence type="ECO:0000269" key="4">
    <source>
    </source>
</evidence>
<evidence type="ECO:0000269" key="5">
    <source>
    </source>
</evidence>
<evidence type="ECO:0000269" key="6">
    <source>
    </source>
</evidence>
<evidence type="ECO:0000269" key="7">
    <source>
    </source>
</evidence>
<evidence type="ECO:0000269" key="8">
    <source>
    </source>
</evidence>
<evidence type="ECO:0000269" key="9">
    <source>
    </source>
</evidence>
<evidence type="ECO:0000269" key="10">
    <source>
    </source>
</evidence>
<evidence type="ECO:0000269" key="11">
    <source>
    </source>
</evidence>
<evidence type="ECO:0000269" key="12">
    <source>
    </source>
</evidence>
<evidence type="ECO:0000269" key="13">
    <source>
    </source>
</evidence>
<evidence type="ECO:0000269" key="14">
    <source>
    </source>
</evidence>
<evidence type="ECO:0000269" key="15">
    <source>
    </source>
</evidence>
<evidence type="ECO:0000269" key="16">
    <source>
    </source>
</evidence>
<evidence type="ECO:0000303" key="17">
    <source>
    </source>
</evidence>
<evidence type="ECO:0000305" key="18"/>
<reference key="1">
    <citation type="journal article" date="1995" name="J. Cell Biol.">
        <title>Anillin, a contractile ring protein that cycles from the nucleus to the cell cortex.</title>
        <authorList>
            <person name="Field C.M."/>
            <person name="Alberts B.M."/>
        </authorList>
    </citation>
    <scope>NUCLEOTIDE SEQUENCE [MRNA] (ISOFORM A)</scope>
    <scope>INTERACTION WITH ACTIN</scope>
    <scope>SUBCELLULAR LOCATION</scope>
    <scope>DEVELOPMENTAL STAGE</scope>
    <source>
        <tissue>Embryo</tissue>
    </source>
</reference>
<reference key="2">
    <citation type="journal article" date="2000" name="Science">
        <title>The genome sequence of Drosophila melanogaster.</title>
        <authorList>
            <person name="Adams M.D."/>
            <person name="Celniker S.E."/>
            <person name="Holt R.A."/>
            <person name="Evans C.A."/>
            <person name="Gocayne J.D."/>
            <person name="Amanatides P.G."/>
            <person name="Scherer S.E."/>
            <person name="Li P.W."/>
            <person name="Hoskins R.A."/>
            <person name="Galle R.F."/>
            <person name="George R.A."/>
            <person name="Lewis S.E."/>
            <person name="Richards S."/>
            <person name="Ashburner M."/>
            <person name="Henderson S.N."/>
            <person name="Sutton G.G."/>
            <person name="Wortman J.R."/>
            <person name="Yandell M.D."/>
            <person name="Zhang Q."/>
            <person name="Chen L.X."/>
            <person name="Brandon R.C."/>
            <person name="Rogers Y.-H.C."/>
            <person name="Blazej R.G."/>
            <person name="Champe M."/>
            <person name="Pfeiffer B.D."/>
            <person name="Wan K.H."/>
            <person name="Doyle C."/>
            <person name="Baxter E.G."/>
            <person name="Helt G."/>
            <person name="Nelson C.R."/>
            <person name="Miklos G.L.G."/>
            <person name="Abril J.F."/>
            <person name="Agbayani A."/>
            <person name="An H.-J."/>
            <person name="Andrews-Pfannkoch C."/>
            <person name="Baldwin D."/>
            <person name="Ballew R.M."/>
            <person name="Basu A."/>
            <person name="Baxendale J."/>
            <person name="Bayraktaroglu L."/>
            <person name="Beasley E.M."/>
            <person name="Beeson K.Y."/>
            <person name="Benos P.V."/>
            <person name="Berman B.P."/>
            <person name="Bhandari D."/>
            <person name="Bolshakov S."/>
            <person name="Borkova D."/>
            <person name="Botchan M.R."/>
            <person name="Bouck J."/>
            <person name="Brokstein P."/>
            <person name="Brottier P."/>
            <person name="Burtis K.C."/>
            <person name="Busam D.A."/>
            <person name="Butler H."/>
            <person name="Cadieu E."/>
            <person name="Center A."/>
            <person name="Chandra I."/>
            <person name="Cherry J.M."/>
            <person name="Cawley S."/>
            <person name="Dahlke C."/>
            <person name="Davenport L.B."/>
            <person name="Davies P."/>
            <person name="de Pablos B."/>
            <person name="Delcher A."/>
            <person name="Deng Z."/>
            <person name="Mays A.D."/>
            <person name="Dew I."/>
            <person name="Dietz S.M."/>
            <person name="Dodson K."/>
            <person name="Doup L.E."/>
            <person name="Downes M."/>
            <person name="Dugan-Rocha S."/>
            <person name="Dunkov B.C."/>
            <person name="Dunn P."/>
            <person name="Durbin K.J."/>
            <person name="Evangelista C.C."/>
            <person name="Ferraz C."/>
            <person name="Ferriera S."/>
            <person name="Fleischmann W."/>
            <person name="Fosler C."/>
            <person name="Gabrielian A.E."/>
            <person name="Garg N.S."/>
            <person name="Gelbart W.M."/>
            <person name="Glasser K."/>
            <person name="Glodek A."/>
            <person name="Gong F."/>
            <person name="Gorrell J.H."/>
            <person name="Gu Z."/>
            <person name="Guan P."/>
            <person name="Harris M."/>
            <person name="Harris N.L."/>
            <person name="Harvey D.A."/>
            <person name="Heiman T.J."/>
            <person name="Hernandez J.R."/>
            <person name="Houck J."/>
            <person name="Hostin D."/>
            <person name="Houston K.A."/>
            <person name="Howland T.J."/>
            <person name="Wei M.-H."/>
            <person name="Ibegwam C."/>
            <person name="Jalali M."/>
            <person name="Kalush F."/>
            <person name="Karpen G.H."/>
            <person name="Ke Z."/>
            <person name="Kennison J.A."/>
            <person name="Ketchum K.A."/>
            <person name="Kimmel B.E."/>
            <person name="Kodira C.D."/>
            <person name="Kraft C.L."/>
            <person name="Kravitz S."/>
            <person name="Kulp D."/>
            <person name="Lai Z."/>
            <person name="Lasko P."/>
            <person name="Lei Y."/>
            <person name="Levitsky A.A."/>
            <person name="Li J.H."/>
            <person name="Li Z."/>
            <person name="Liang Y."/>
            <person name="Lin X."/>
            <person name="Liu X."/>
            <person name="Mattei B."/>
            <person name="McIntosh T.C."/>
            <person name="McLeod M.P."/>
            <person name="McPherson D."/>
            <person name="Merkulov G."/>
            <person name="Milshina N.V."/>
            <person name="Mobarry C."/>
            <person name="Morris J."/>
            <person name="Moshrefi A."/>
            <person name="Mount S.M."/>
            <person name="Moy M."/>
            <person name="Murphy B."/>
            <person name="Murphy L."/>
            <person name="Muzny D.M."/>
            <person name="Nelson D.L."/>
            <person name="Nelson D.R."/>
            <person name="Nelson K.A."/>
            <person name="Nixon K."/>
            <person name="Nusskern D.R."/>
            <person name="Pacleb J.M."/>
            <person name="Palazzolo M."/>
            <person name="Pittman G.S."/>
            <person name="Pan S."/>
            <person name="Pollard J."/>
            <person name="Puri V."/>
            <person name="Reese M.G."/>
            <person name="Reinert K."/>
            <person name="Remington K."/>
            <person name="Saunders R.D.C."/>
            <person name="Scheeler F."/>
            <person name="Shen H."/>
            <person name="Shue B.C."/>
            <person name="Siden-Kiamos I."/>
            <person name="Simpson M."/>
            <person name="Skupski M.P."/>
            <person name="Smith T.J."/>
            <person name="Spier E."/>
            <person name="Spradling A.C."/>
            <person name="Stapleton M."/>
            <person name="Strong R."/>
            <person name="Sun E."/>
            <person name="Svirskas R."/>
            <person name="Tector C."/>
            <person name="Turner R."/>
            <person name="Venter E."/>
            <person name="Wang A.H."/>
            <person name="Wang X."/>
            <person name="Wang Z.-Y."/>
            <person name="Wassarman D.A."/>
            <person name="Weinstock G.M."/>
            <person name="Weissenbach J."/>
            <person name="Williams S.M."/>
            <person name="Woodage T."/>
            <person name="Worley K.C."/>
            <person name="Wu D."/>
            <person name="Yang S."/>
            <person name="Yao Q.A."/>
            <person name="Ye J."/>
            <person name="Yeh R.-F."/>
            <person name="Zaveri J.S."/>
            <person name="Zhan M."/>
            <person name="Zhang G."/>
            <person name="Zhao Q."/>
            <person name="Zheng L."/>
            <person name="Zheng X.H."/>
            <person name="Zhong F.N."/>
            <person name="Zhong W."/>
            <person name="Zhou X."/>
            <person name="Zhu S.C."/>
            <person name="Zhu X."/>
            <person name="Smith H.O."/>
            <person name="Gibbs R.A."/>
            <person name="Myers E.W."/>
            <person name="Rubin G.M."/>
            <person name="Venter J.C."/>
        </authorList>
    </citation>
    <scope>NUCLEOTIDE SEQUENCE [LARGE SCALE GENOMIC DNA]</scope>
    <source>
        <strain>Berkeley</strain>
    </source>
</reference>
<reference key="3">
    <citation type="journal article" date="2002" name="Genome Biol.">
        <title>Annotation of the Drosophila melanogaster euchromatic genome: a systematic review.</title>
        <authorList>
            <person name="Misra S."/>
            <person name="Crosby M.A."/>
            <person name="Mungall C.J."/>
            <person name="Matthews B.B."/>
            <person name="Campbell K.S."/>
            <person name="Hradecky P."/>
            <person name="Huang Y."/>
            <person name="Kaminker J.S."/>
            <person name="Millburn G.H."/>
            <person name="Prochnik S.E."/>
            <person name="Smith C.D."/>
            <person name="Tupy J.L."/>
            <person name="Whitfield E.J."/>
            <person name="Bayraktaroglu L."/>
            <person name="Berman B.P."/>
            <person name="Bettencourt B.R."/>
            <person name="Celniker S.E."/>
            <person name="de Grey A.D.N.J."/>
            <person name="Drysdale R.A."/>
            <person name="Harris N.L."/>
            <person name="Richter J."/>
            <person name="Russo S."/>
            <person name="Schroeder A.J."/>
            <person name="Shu S.Q."/>
            <person name="Stapleton M."/>
            <person name="Yamada C."/>
            <person name="Ashburner M."/>
            <person name="Gelbart W.M."/>
            <person name="Rubin G.M."/>
            <person name="Lewis S.E."/>
        </authorList>
    </citation>
    <scope>GENOME REANNOTATION</scope>
    <scope>ALTERNATIVE SPLICING</scope>
    <source>
        <strain>Berkeley</strain>
    </source>
</reference>
<reference key="4">
    <citation type="journal article" date="2002" name="Genome Biol.">
        <title>A Drosophila full-length cDNA resource.</title>
        <authorList>
            <person name="Stapleton M."/>
            <person name="Carlson J.W."/>
            <person name="Brokstein P."/>
            <person name="Yu C."/>
            <person name="Champe M."/>
            <person name="George R.A."/>
            <person name="Guarin H."/>
            <person name="Kronmiller B."/>
            <person name="Pacleb J.M."/>
            <person name="Park S."/>
            <person name="Wan K.H."/>
            <person name="Rubin G.M."/>
            <person name="Celniker S.E."/>
        </authorList>
    </citation>
    <scope>NUCLEOTIDE SEQUENCE [LARGE SCALE MRNA] (ISOFORM B)</scope>
    <source>
        <strain>Berkeley</strain>
        <tissue>Embryo</tissue>
    </source>
</reference>
<reference key="5">
    <citation type="journal article" date="1996" name="J. Cell Sci.">
        <title>Assembly of ring canals in the male germ line from structural components of the contractile ring.</title>
        <authorList>
            <person name="Hime G.R."/>
            <person name="Brill J.A."/>
            <person name="Fuller M.T."/>
        </authorList>
    </citation>
    <scope>SUBCELLULAR LOCATION</scope>
    <scope>TISSUE SPECIFICITY</scope>
</reference>
<reference key="6">
    <citation type="journal article" date="1998" name="Development">
        <title>Nuclear-fallout, a Drosophila protein that cycles from the cytoplasm to the centrosomes, regulates cortical microfilament organization.</title>
        <authorList>
            <person name="Rothwell W.F."/>
            <person name="Fogarty P."/>
            <person name="Field C.M."/>
            <person name="Sullivan W."/>
        </authorList>
    </citation>
    <scope>SUBCELLULAR LOCATION</scope>
</reference>
<reference key="7">
    <citation type="journal article" date="1998" name="Development">
        <title>Morphogenesis of the Drosophila fusome and its implications for oocyte specification.</title>
        <authorList>
            <person name="de Cuevas M."/>
            <person name="Spradling A.C."/>
        </authorList>
    </citation>
    <scope>SUBCELLULAR LOCATION</scope>
    <scope>TISSUE SPECIFICITY</scope>
</reference>
<reference key="8">
    <citation type="journal article" date="1999" name="J. Cell Sci.">
        <title>The role of anillin in meiotic cytokinesis of Drosophila males.</title>
        <authorList>
            <person name="Giansanti M.G."/>
            <person name="Bonaccorsi S."/>
            <person name="Gatti M."/>
        </authorList>
    </citation>
    <scope>SUBCELLULAR LOCATION</scope>
    <scope>TISSUE SPECIFICITY</scope>
</reference>
<reference key="9">
    <citation type="journal article" date="1999" name="J. Cell Sci.">
        <title>The Drosophila centrosomal protein Nuf is required for recruiting Dah, a membrane associated protein, to furrows in the early embryo.</title>
        <authorList>
            <person name="Rothwell W.F."/>
            <person name="Zhang C.X."/>
            <person name="Zelano C."/>
            <person name="Hsieh T.-S."/>
            <person name="Sullivan W."/>
        </authorList>
    </citation>
    <scope>SUBCELLULAR LOCATION</scope>
</reference>
<reference key="10">
    <citation type="journal article" date="2000" name="Development">
        <title>Functional analysis of the Drosophila diaphanous FH protein in early embryonic development.</title>
        <authorList>
            <person name="Afshar K."/>
            <person name="Stuart B."/>
            <person name="Wasserman S.A."/>
        </authorList>
    </citation>
    <scope>DEVELOPMENTAL STAGE</scope>
</reference>
<reference key="11">
    <citation type="journal article" date="2002" name="Mol. Biol. Cell">
        <title>Molecular dissection of cytokinesis by RNA interference in Drosophila cultured cells.</title>
        <authorList>
            <person name="Somma M.P."/>
            <person name="Fasulo B."/>
            <person name="Cenci G."/>
            <person name="Cundari E."/>
            <person name="Gatti M."/>
        </authorList>
    </citation>
    <scope>FUNCTION</scope>
    <scope>SUBCELLULAR LOCATION</scope>
</reference>
<reference key="12">
    <citation type="journal article" date="2003" name="Development">
        <title>Orbit/Mast, the CLASP orthologue of Drosophila, is required for asymmetric stem cell and cystocyte divisions and development of the polarised microtubule network that interconnects oocyte and nurse cells during oogenesis.</title>
        <authorList>
            <person name="Mathe E."/>
            <person name="Inoue Y.H."/>
            <person name="Palframan W."/>
            <person name="Brown G."/>
            <person name="Glover D.M."/>
        </authorList>
    </citation>
    <scope>SUBCELLULAR LOCATION</scope>
    <scope>TISSUE SPECIFICITY</scope>
</reference>
<reference key="13">
    <citation type="journal article" date="2004" name="Curr. Biol.">
        <title>Terminal cytokinesis events uncovered after an RNAi screen.</title>
        <authorList>
            <person name="Echard A."/>
            <person name="Hickson G.R.X."/>
            <person name="Foley E."/>
            <person name="O'Farrell P.H."/>
        </authorList>
    </citation>
    <scope>FUNCTION</scope>
    <scope>SUBCELLULAR LOCATION</scope>
</reference>
<reference key="14">
    <citation type="journal article" date="2004" name="Development">
        <title>src64 and tec29 are required for microfilament contraction during Drosophila cellularization.</title>
        <authorList>
            <person name="Thomas J.H."/>
            <person name="Wieschaus E."/>
        </authorList>
    </citation>
    <scope>FUNCTION</scope>
    <scope>SUBCELLULAR LOCATION</scope>
    <scope>DEVELOPMENTAL STAGE</scope>
</reference>
<reference key="15">
    <citation type="journal article" date="2004" name="J. Cell Biol.">
        <title>Mutations in sticky lead to defective organization of the contractile ring during cytokinesis and are enhanced by Rho and suppressed by Rac.</title>
        <authorList>
            <person name="D'Avino P.P."/>
            <person name="Savoian M.S."/>
            <person name="Glover D.M."/>
        </authorList>
    </citation>
    <scope>SUBCELLULAR LOCATION</scope>
</reference>
<reference key="16">
    <citation type="journal article" date="2004" name="Mol. Biol. Cell">
        <title>Genetic dissection of meiotic cytokinesis in Drosophila males.</title>
        <authorList>
            <person name="Giansanti M.G."/>
            <person name="Farkas R.M."/>
            <person name="Bonaccorsi S."/>
            <person name="Lindsley D.L."/>
            <person name="Wakimoto B.T."/>
            <person name="Fuller M.T."/>
            <person name="Gatti M."/>
        </authorList>
    </citation>
    <scope>SUBCELLULAR LOCATION</scope>
</reference>
<reference key="17">
    <citation type="journal article" date="2004" name="Mol. Biol. Cell">
        <title>Drosophila citron kinase is required for the final steps of cytokinesis.</title>
        <authorList>
            <person name="Naim V."/>
            <person name="Imarisio S."/>
            <person name="Di Cunto F."/>
            <person name="Gatti M."/>
            <person name="Bonaccorsi S."/>
        </authorList>
    </citation>
    <scope>SUBCELLULAR LOCATION</scope>
</reference>
<reference key="18">
    <citation type="journal article" date="2005" name="Development">
        <title>Characterization of anillin mutants reveals essential roles in septin localization and plasma membrane integrity.</title>
        <authorList>
            <person name="Field C.M."/>
            <person name="Coughlin M."/>
            <person name="Doberstein S."/>
            <person name="Marty T."/>
            <person name="Sullivan W."/>
        </authorList>
    </citation>
    <scope>FUNCTION</scope>
    <scope>SUBCELLULAR LOCATION</scope>
    <scope>CHARACTERIZATION OF MUTANTS ILE-549; SER-1107; ILE-1114; GLU-1121 AND SER-1143</scope>
</reference>
<reference key="19">
    <citation type="journal article" date="2005" name="J. Cell Sci.">
        <title>Tum/RacGAP50C provides a critical link between anaphase microtubules and the assembly of the contractile ring in Drosophila melanogaster.</title>
        <authorList>
            <person name="Zavortink M."/>
            <person name="Contreras N."/>
            <person name="Addy T."/>
            <person name="Bejsovec A."/>
            <person name="Saint R."/>
        </authorList>
    </citation>
    <scope>SUBCELLULAR LOCATION</scope>
</reference>
<reference key="20">
    <citation type="journal article" date="2005" name="Mol. Biol. Cell">
        <title>Anillin binds nonmuscle myosin II and regulates the contractile ring.</title>
        <authorList>
            <person name="Straight A.F."/>
            <person name="Field C.M."/>
            <person name="Mitchison T.J."/>
        </authorList>
    </citation>
    <scope>FUNCTION</scope>
    <scope>SUBCELLULAR LOCATION</scope>
</reference>
<reference key="21">
    <citation type="journal article" date="2008" name="J. Proteome Res.">
        <title>Phosphoproteome analysis of Drosophila melanogaster embryos.</title>
        <authorList>
            <person name="Zhai B."/>
            <person name="Villen J."/>
            <person name="Beausoleil S.A."/>
            <person name="Mintseris J."/>
            <person name="Gygi S.P."/>
        </authorList>
    </citation>
    <scope>PHOSPHORYLATION [LARGE SCALE ANALYSIS] AT SER-712; THR-740; SER-744; SER-754 AND THR-831</scope>
    <scope>IDENTIFICATION BY MASS SPECTROMETRY</scope>
    <source>
        <tissue>Embryo</tissue>
    </source>
</reference>
<reference key="22">
    <citation type="journal article" date="2010" name="Mol. Biol. Cell">
        <title>Phosphatidylinositol 4,5-bisphosphate directs spermatid cell polarity and exocyst localization in Drosophila.</title>
        <authorList>
            <person name="Fabian L."/>
            <person name="Wei H.C."/>
            <person name="Rollins J."/>
            <person name="Noguchi T."/>
            <person name="Blankenship J.T."/>
            <person name="Bellamkonda K."/>
            <person name="Polevoy G."/>
            <person name="Gervais L."/>
            <person name="Guichet A."/>
            <person name="Fuller M.T."/>
            <person name="Brill J.A."/>
        </authorList>
    </citation>
    <scope>SUBCELLULAR LOCATION</scope>
    <scope>DEVELOPMENTAL STAGE</scope>
</reference>
<name>ANLN_DROME</name>
<keyword id="KW-0009">Actin-binding</keyword>
<keyword id="KW-0025">Alternative splicing</keyword>
<keyword id="KW-0131">Cell cycle</keyword>
<keyword id="KW-0132">Cell division</keyword>
<keyword id="KW-0966">Cell projection</keyword>
<keyword id="KW-0969">Cilium</keyword>
<keyword id="KW-0175">Coiled coil</keyword>
<keyword id="KW-0963">Cytoplasm</keyword>
<keyword id="KW-0206">Cytoskeleton</keyword>
<keyword id="KW-0217">Developmental protein</keyword>
<keyword id="KW-0221">Differentiation</keyword>
<keyword id="KW-0282">Flagellum</keyword>
<keyword id="KW-0469">Meiosis</keyword>
<keyword id="KW-0498">Mitosis</keyword>
<keyword id="KW-0539">Nucleus</keyword>
<keyword id="KW-0896">Oogenesis</keyword>
<keyword id="KW-0597">Phosphoprotein</keyword>
<keyword id="KW-1185">Reference proteome</keyword>
<keyword id="KW-0744">Spermatogenesis</keyword>